<accession>C0ZCE4</accession>
<dbReference type="EC" id="5.3.1.24" evidence="1"/>
<dbReference type="EMBL" id="AP008955">
    <property type="protein sequence ID" value="BAH43453.1"/>
    <property type="molecule type" value="Genomic_DNA"/>
</dbReference>
<dbReference type="RefSeq" id="WP_012686160.1">
    <property type="nucleotide sequence ID" value="NC_012491.1"/>
</dbReference>
<dbReference type="SMR" id="C0ZCE4"/>
<dbReference type="STRING" id="358681.BBR47_24760"/>
<dbReference type="KEGG" id="bbe:BBR47_24760"/>
<dbReference type="eggNOG" id="COG0135">
    <property type="taxonomic scope" value="Bacteria"/>
</dbReference>
<dbReference type="HOGENOM" id="CLU_076364_1_0_9"/>
<dbReference type="UniPathway" id="UPA00035">
    <property type="reaction ID" value="UER00042"/>
</dbReference>
<dbReference type="Proteomes" id="UP000001877">
    <property type="component" value="Chromosome"/>
</dbReference>
<dbReference type="GO" id="GO:0004640">
    <property type="term" value="F:phosphoribosylanthranilate isomerase activity"/>
    <property type="evidence" value="ECO:0007669"/>
    <property type="project" value="UniProtKB-UniRule"/>
</dbReference>
<dbReference type="GO" id="GO:0000162">
    <property type="term" value="P:L-tryptophan biosynthetic process"/>
    <property type="evidence" value="ECO:0007669"/>
    <property type="project" value="UniProtKB-UniRule"/>
</dbReference>
<dbReference type="CDD" id="cd00405">
    <property type="entry name" value="PRAI"/>
    <property type="match status" value="1"/>
</dbReference>
<dbReference type="Gene3D" id="3.20.20.70">
    <property type="entry name" value="Aldolase class I"/>
    <property type="match status" value="1"/>
</dbReference>
<dbReference type="HAMAP" id="MF_00135">
    <property type="entry name" value="PRAI"/>
    <property type="match status" value="1"/>
</dbReference>
<dbReference type="InterPro" id="IPR013785">
    <property type="entry name" value="Aldolase_TIM"/>
</dbReference>
<dbReference type="InterPro" id="IPR001240">
    <property type="entry name" value="PRAI_dom"/>
</dbReference>
<dbReference type="InterPro" id="IPR011060">
    <property type="entry name" value="RibuloseP-bd_barrel"/>
</dbReference>
<dbReference type="InterPro" id="IPR044643">
    <property type="entry name" value="TrpF_fam"/>
</dbReference>
<dbReference type="PANTHER" id="PTHR42894">
    <property type="entry name" value="N-(5'-PHOSPHORIBOSYL)ANTHRANILATE ISOMERASE"/>
    <property type="match status" value="1"/>
</dbReference>
<dbReference type="PANTHER" id="PTHR42894:SF1">
    <property type="entry name" value="N-(5'-PHOSPHORIBOSYL)ANTHRANILATE ISOMERASE"/>
    <property type="match status" value="1"/>
</dbReference>
<dbReference type="Pfam" id="PF00697">
    <property type="entry name" value="PRAI"/>
    <property type="match status" value="1"/>
</dbReference>
<dbReference type="SUPFAM" id="SSF51366">
    <property type="entry name" value="Ribulose-phoshate binding barrel"/>
    <property type="match status" value="1"/>
</dbReference>
<proteinExistence type="inferred from homology"/>
<organism>
    <name type="scientific">Brevibacillus brevis (strain 47 / JCM 6285 / NBRC 100599)</name>
    <dbReference type="NCBI Taxonomy" id="358681"/>
    <lineage>
        <taxon>Bacteria</taxon>
        <taxon>Bacillati</taxon>
        <taxon>Bacillota</taxon>
        <taxon>Bacilli</taxon>
        <taxon>Bacillales</taxon>
        <taxon>Paenibacillaceae</taxon>
        <taxon>Brevibacillus</taxon>
    </lineage>
</organism>
<name>TRPF_BREBN</name>
<evidence type="ECO:0000255" key="1">
    <source>
        <dbReference type="HAMAP-Rule" id="MF_00135"/>
    </source>
</evidence>
<feature type="chain" id="PRO_1000197084" description="N-(5'-phosphoribosyl)anthranilate isomerase">
    <location>
        <begin position="1"/>
        <end position="222"/>
    </location>
</feature>
<sequence>MTRLKICGIKRTETLALLKELEVDYVGLVFAPSKRQVDAQTAGQLLAAVPGHPPAVGVFVNPTMEELEEVLSEAPLSVIQLHGQETPQFCQQVRERFALPVWKALAVGGEADAALAIQSYQGIVSAFLFDTYDPGQAGGTGKKFSWEQIPALQAACEAADCIIAGGIHAENVGELMGQYQAGIVDVSSGVETDGVKDAQKIKTLVERVKAHEQHSNNYASRA</sequence>
<keyword id="KW-0028">Amino-acid biosynthesis</keyword>
<keyword id="KW-0057">Aromatic amino acid biosynthesis</keyword>
<keyword id="KW-0413">Isomerase</keyword>
<keyword id="KW-1185">Reference proteome</keyword>
<keyword id="KW-0822">Tryptophan biosynthesis</keyword>
<gene>
    <name evidence="1" type="primary">trpF</name>
    <name type="ordered locus">BBR47_24760</name>
</gene>
<comment type="catalytic activity">
    <reaction evidence="1">
        <text>N-(5-phospho-beta-D-ribosyl)anthranilate = 1-(2-carboxyphenylamino)-1-deoxy-D-ribulose 5-phosphate</text>
        <dbReference type="Rhea" id="RHEA:21540"/>
        <dbReference type="ChEBI" id="CHEBI:18277"/>
        <dbReference type="ChEBI" id="CHEBI:58613"/>
        <dbReference type="EC" id="5.3.1.24"/>
    </reaction>
</comment>
<comment type="pathway">
    <text evidence="1">Amino-acid biosynthesis; L-tryptophan biosynthesis; L-tryptophan from chorismate: step 3/5.</text>
</comment>
<comment type="similarity">
    <text evidence="1">Belongs to the TrpF family.</text>
</comment>
<reference key="1">
    <citation type="submission" date="2005-03" db="EMBL/GenBank/DDBJ databases">
        <title>Brevibacillus brevis strain 47, complete genome.</title>
        <authorList>
            <person name="Hosoyama A."/>
            <person name="Yamada R."/>
            <person name="Hongo Y."/>
            <person name="Terui Y."/>
            <person name="Ankai A."/>
            <person name="Masuyama W."/>
            <person name="Sekiguchi M."/>
            <person name="Takeda T."/>
            <person name="Asano K."/>
            <person name="Ohji S."/>
            <person name="Ichikawa N."/>
            <person name="Narita S."/>
            <person name="Aoki N."/>
            <person name="Miura H."/>
            <person name="Matsushita S."/>
            <person name="Sekigawa T."/>
            <person name="Yamagata H."/>
            <person name="Yoshikawa H."/>
            <person name="Udaka S."/>
            <person name="Tanikawa S."/>
            <person name="Fujita N."/>
        </authorList>
    </citation>
    <scope>NUCLEOTIDE SEQUENCE [LARGE SCALE GENOMIC DNA]</scope>
    <source>
        <strain>47 / JCM 6285 / NBRC 100599</strain>
    </source>
</reference>
<protein>
    <recommendedName>
        <fullName evidence="1">N-(5'-phosphoribosyl)anthranilate isomerase</fullName>
        <shortName evidence="1">PRAI</shortName>
        <ecNumber evidence="1">5.3.1.24</ecNumber>
    </recommendedName>
</protein>